<keyword id="KW-0067">ATP-binding</keyword>
<keyword id="KW-0131">Cell cycle</keyword>
<keyword id="KW-0132">Cell division</keyword>
<keyword id="KW-0133">Cell shape</keyword>
<keyword id="KW-0961">Cell wall biogenesis/degradation</keyword>
<keyword id="KW-0963">Cytoplasm</keyword>
<keyword id="KW-0436">Ligase</keyword>
<keyword id="KW-0547">Nucleotide-binding</keyword>
<keyword id="KW-0573">Peptidoglycan synthesis</keyword>
<feature type="chain" id="PRO_1000117390" description="UDP-N-acetylmuramate--L-alanine ligase">
    <location>
        <begin position="1"/>
        <end position="436"/>
    </location>
</feature>
<feature type="binding site" evidence="1">
    <location>
        <begin position="108"/>
        <end position="114"/>
    </location>
    <ligand>
        <name>ATP</name>
        <dbReference type="ChEBI" id="CHEBI:30616"/>
    </ligand>
</feature>
<evidence type="ECO:0000255" key="1">
    <source>
        <dbReference type="HAMAP-Rule" id="MF_00046"/>
    </source>
</evidence>
<comment type="function">
    <text evidence="1">Cell wall formation.</text>
</comment>
<comment type="catalytic activity">
    <reaction evidence="1">
        <text>UDP-N-acetyl-alpha-D-muramate + L-alanine + ATP = UDP-N-acetyl-alpha-D-muramoyl-L-alanine + ADP + phosphate + H(+)</text>
        <dbReference type="Rhea" id="RHEA:23372"/>
        <dbReference type="ChEBI" id="CHEBI:15378"/>
        <dbReference type="ChEBI" id="CHEBI:30616"/>
        <dbReference type="ChEBI" id="CHEBI:43474"/>
        <dbReference type="ChEBI" id="CHEBI:57972"/>
        <dbReference type="ChEBI" id="CHEBI:70757"/>
        <dbReference type="ChEBI" id="CHEBI:83898"/>
        <dbReference type="ChEBI" id="CHEBI:456216"/>
        <dbReference type="EC" id="6.3.2.8"/>
    </reaction>
</comment>
<comment type="pathway">
    <text evidence="1">Cell wall biogenesis; peptidoglycan biosynthesis.</text>
</comment>
<comment type="subcellular location">
    <subcellularLocation>
        <location evidence="1">Cytoplasm</location>
    </subcellularLocation>
</comment>
<comment type="similarity">
    <text evidence="1">Belongs to the MurCDEF family.</text>
</comment>
<accession>C3L9Z3</accession>
<protein>
    <recommendedName>
        <fullName evidence="1">UDP-N-acetylmuramate--L-alanine ligase</fullName>
        <ecNumber evidence="1">6.3.2.8</ecNumber>
    </recommendedName>
    <alternativeName>
        <fullName evidence="1">UDP-N-acetylmuramoyl-L-alanine synthetase</fullName>
    </alternativeName>
</protein>
<reference key="1">
    <citation type="submission" date="2008-10" db="EMBL/GenBank/DDBJ databases">
        <title>Genome sequence of Bacillus anthracis str. CDC 684.</title>
        <authorList>
            <person name="Dodson R.J."/>
            <person name="Munk A.C."/>
            <person name="Brettin T."/>
            <person name="Bruce D."/>
            <person name="Detter C."/>
            <person name="Tapia R."/>
            <person name="Han C."/>
            <person name="Sutton G."/>
            <person name="Sims D."/>
        </authorList>
    </citation>
    <scope>NUCLEOTIDE SEQUENCE [LARGE SCALE GENOMIC DNA]</scope>
    <source>
        <strain>CDC 684 / NRRL 3495</strain>
    </source>
</reference>
<gene>
    <name evidence="1" type="primary">murC</name>
    <name type="ordered locus">BAMEG_4969</name>
</gene>
<proteinExistence type="inferred from homology"/>
<sequence>MTVYHFVGIKGTGMSSLAQILHDMKHTVQGSDYEKRFFTQTALEKRNISILPFDKSNVKEGQVIIAGNAFPDTHEEIVAAKELNIPVHRYHHFLGDLMNQYTSVAVTGAHGKTSTTGLLAHVMQGAHPTSYLIGDGTGHGVENSKYFVFEACEYRRHFLSYNPDYAIMTNIDFDHPDYFTDINDVFSAFQEMALQVKKGIIACGDDEELQKIQAKVPVIFYGFGEDNDFQARNIQKRTDGTIFDVFVRNTYYDTFKITGYGNHSVLNALAVIALCHYENVDVEAVKHQLTTFEGVKRRFNEKPMGEQVIIDDYAHHPTEINATIEAARQKHPEREIVAVFQPHTFSRTEKFLDEFAESLSKADQVYLCDIFGSARENKGELTIEDLQKRIDGAELITDTTTDVLKKHKNGVLIFMGAGDIQKFEAAYVKEVQVAEK</sequence>
<organism>
    <name type="scientific">Bacillus anthracis (strain CDC 684 / NRRL 3495)</name>
    <dbReference type="NCBI Taxonomy" id="568206"/>
    <lineage>
        <taxon>Bacteria</taxon>
        <taxon>Bacillati</taxon>
        <taxon>Bacillota</taxon>
        <taxon>Bacilli</taxon>
        <taxon>Bacillales</taxon>
        <taxon>Bacillaceae</taxon>
        <taxon>Bacillus</taxon>
        <taxon>Bacillus cereus group</taxon>
    </lineage>
</organism>
<dbReference type="EC" id="6.3.2.8" evidence="1"/>
<dbReference type="EMBL" id="CP001215">
    <property type="protein sequence ID" value="ACP14359.1"/>
    <property type="molecule type" value="Genomic_DNA"/>
</dbReference>
<dbReference type="RefSeq" id="WP_000219465.1">
    <property type="nucleotide sequence ID" value="NC_012581.1"/>
</dbReference>
<dbReference type="SMR" id="C3L9Z3"/>
<dbReference type="GeneID" id="45024558"/>
<dbReference type="KEGG" id="bah:BAMEG_4969"/>
<dbReference type="HOGENOM" id="CLU_028104_1_0_9"/>
<dbReference type="UniPathway" id="UPA00219"/>
<dbReference type="GO" id="GO:0005737">
    <property type="term" value="C:cytoplasm"/>
    <property type="evidence" value="ECO:0007669"/>
    <property type="project" value="UniProtKB-SubCell"/>
</dbReference>
<dbReference type="GO" id="GO:0005524">
    <property type="term" value="F:ATP binding"/>
    <property type="evidence" value="ECO:0007669"/>
    <property type="project" value="UniProtKB-UniRule"/>
</dbReference>
<dbReference type="GO" id="GO:0008763">
    <property type="term" value="F:UDP-N-acetylmuramate-L-alanine ligase activity"/>
    <property type="evidence" value="ECO:0007669"/>
    <property type="project" value="UniProtKB-UniRule"/>
</dbReference>
<dbReference type="GO" id="GO:0051301">
    <property type="term" value="P:cell division"/>
    <property type="evidence" value="ECO:0007669"/>
    <property type="project" value="UniProtKB-KW"/>
</dbReference>
<dbReference type="GO" id="GO:0071555">
    <property type="term" value="P:cell wall organization"/>
    <property type="evidence" value="ECO:0007669"/>
    <property type="project" value="UniProtKB-KW"/>
</dbReference>
<dbReference type="GO" id="GO:0009252">
    <property type="term" value="P:peptidoglycan biosynthetic process"/>
    <property type="evidence" value="ECO:0007669"/>
    <property type="project" value="UniProtKB-UniRule"/>
</dbReference>
<dbReference type="GO" id="GO:0008360">
    <property type="term" value="P:regulation of cell shape"/>
    <property type="evidence" value="ECO:0007669"/>
    <property type="project" value="UniProtKB-KW"/>
</dbReference>
<dbReference type="Gene3D" id="3.90.190.20">
    <property type="entry name" value="Mur ligase, C-terminal domain"/>
    <property type="match status" value="1"/>
</dbReference>
<dbReference type="Gene3D" id="3.40.1190.10">
    <property type="entry name" value="Mur-like, catalytic domain"/>
    <property type="match status" value="1"/>
</dbReference>
<dbReference type="Gene3D" id="3.40.50.720">
    <property type="entry name" value="NAD(P)-binding Rossmann-like Domain"/>
    <property type="match status" value="1"/>
</dbReference>
<dbReference type="HAMAP" id="MF_00046">
    <property type="entry name" value="MurC"/>
    <property type="match status" value="1"/>
</dbReference>
<dbReference type="InterPro" id="IPR036565">
    <property type="entry name" value="Mur-like_cat_sf"/>
</dbReference>
<dbReference type="InterPro" id="IPR004101">
    <property type="entry name" value="Mur_ligase_C"/>
</dbReference>
<dbReference type="InterPro" id="IPR036615">
    <property type="entry name" value="Mur_ligase_C_dom_sf"/>
</dbReference>
<dbReference type="InterPro" id="IPR013221">
    <property type="entry name" value="Mur_ligase_cen"/>
</dbReference>
<dbReference type="InterPro" id="IPR000713">
    <property type="entry name" value="Mur_ligase_N"/>
</dbReference>
<dbReference type="InterPro" id="IPR050061">
    <property type="entry name" value="MurCDEF_pg_biosynth"/>
</dbReference>
<dbReference type="InterPro" id="IPR005758">
    <property type="entry name" value="UDP-N-AcMur_Ala_ligase_MurC"/>
</dbReference>
<dbReference type="NCBIfam" id="TIGR01082">
    <property type="entry name" value="murC"/>
    <property type="match status" value="1"/>
</dbReference>
<dbReference type="PANTHER" id="PTHR43445:SF3">
    <property type="entry name" value="UDP-N-ACETYLMURAMATE--L-ALANINE LIGASE"/>
    <property type="match status" value="1"/>
</dbReference>
<dbReference type="PANTHER" id="PTHR43445">
    <property type="entry name" value="UDP-N-ACETYLMURAMATE--L-ALANINE LIGASE-RELATED"/>
    <property type="match status" value="1"/>
</dbReference>
<dbReference type="Pfam" id="PF01225">
    <property type="entry name" value="Mur_ligase"/>
    <property type="match status" value="1"/>
</dbReference>
<dbReference type="Pfam" id="PF02875">
    <property type="entry name" value="Mur_ligase_C"/>
    <property type="match status" value="1"/>
</dbReference>
<dbReference type="Pfam" id="PF08245">
    <property type="entry name" value="Mur_ligase_M"/>
    <property type="match status" value="1"/>
</dbReference>
<dbReference type="SUPFAM" id="SSF51984">
    <property type="entry name" value="MurCD N-terminal domain"/>
    <property type="match status" value="1"/>
</dbReference>
<dbReference type="SUPFAM" id="SSF53623">
    <property type="entry name" value="MurD-like peptide ligases, catalytic domain"/>
    <property type="match status" value="1"/>
</dbReference>
<dbReference type="SUPFAM" id="SSF53244">
    <property type="entry name" value="MurD-like peptide ligases, peptide-binding domain"/>
    <property type="match status" value="1"/>
</dbReference>
<name>MURC_BACAC</name>